<proteinExistence type="inferred from homology"/>
<keyword id="KW-0028">Amino-acid biosynthesis</keyword>
<keyword id="KW-0057">Aromatic amino acid biosynthesis</keyword>
<keyword id="KW-0067">ATP-binding</keyword>
<keyword id="KW-0963">Cytoplasm</keyword>
<keyword id="KW-0418">Kinase</keyword>
<keyword id="KW-0460">Magnesium</keyword>
<keyword id="KW-0479">Metal-binding</keyword>
<keyword id="KW-0547">Nucleotide-binding</keyword>
<keyword id="KW-0808">Transferase</keyword>
<gene>
    <name evidence="1" type="primary">aroK</name>
    <name type="ordered locus">lpp0994</name>
</gene>
<name>AROK_LEGPA</name>
<comment type="function">
    <text evidence="1">Catalyzes the specific phosphorylation of the 3-hydroxyl group of shikimic acid using ATP as a cosubstrate.</text>
</comment>
<comment type="catalytic activity">
    <reaction evidence="1">
        <text>shikimate + ATP = 3-phosphoshikimate + ADP + H(+)</text>
        <dbReference type="Rhea" id="RHEA:13121"/>
        <dbReference type="ChEBI" id="CHEBI:15378"/>
        <dbReference type="ChEBI" id="CHEBI:30616"/>
        <dbReference type="ChEBI" id="CHEBI:36208"/>
        <dbReference type="ChEBI" id="CHEBI:145989"/>
        <dbReference type="ChEBI" id="CHEBI:456216"/>
        <dbReference type="EC" id="2.7.1.71"/>
    </reaction>
</comment>
<comment type="cofactor">
    <cofactor evidence="1">
        <name>Mg(2+)</name>
        <dbReference type="ChEBI" id="CHEBI:18420"/>
    </cofactor>
    <text evidence="1">Binds 1 Mg(2+) ion per subunit.</text>
</comment>
<comment type="pathway">
    <text evidence="1">Metabolic intermediate biosynthesis; chorismate biosynthesis; chorismate from D-erythrose 4-phosphate and phosphoenolpyruvate: step 5/7.</text>
</comment>
<comment type="subunit">
    <text evidence="1">Monomer.</text>
</comment>
<comment type="subcellular location">
    <subcellularLocation>
        <location evidence="1">Cytoplasm</location>
    </subcellularLocation>
</comment>
<comment type="similarity">
    <text evidence="1">Belongs to the shikimate kinase family.</text>
</comment>
<dbReference type="EC" id="2.7.1.71" evidence="1"/>
<dbReference type="EMBL" id="CR628336">
    <property type="protein sequence ID" value="CAH12145.1"/>
    <property type="molecule type" value="Genomic_DNA"/>
</dbReference>
<dbReference type="SMR" id="Q5X6H1"/>
<dbReference type="KEGG" id="lpp:lpp0994"/>
<dbReference type="LegioList" id="lpp0994"/>
<dbReference type="HOGENOM" id="CLU_057607_2_2_6"/>
<dbReference type="UniPathway" id="UPA00053">
    <property type="reaction ID" value="UER00088"/>
</dbReference>
<dbReference type="GO" id="GO:0005829">
    <property type="term" value="C:cytosol"/>
    <property type="evidence" value="ECO:0007669"/>
    <property type="project" value="TreeGrafter"/>
</dbReference>
<dbReference type="GO" id="GO:0005524">
    <property type="term" value="F:ATP binding"/>
    <property type="evidence" value="ECO:0007669"/>
    <property type="project" value="UniProtKB-UniRule"/>
</dbReference>
<dbReference type="GO" id="GO:0000287">
    <property type="term" value="F:magnesium ion binding"/>
    <property type="evidence" value="ECO:0007669"/>
    <property type="project" value="UniProtKB-UniRule"/>
</dbReference>
<dbReference type="GO" id="GO:0004765">
    <property type="term" value="F:shikimate kinase activity"/>
    <property type="evidence" value="ECO:0007669"/>
    <property type="project" value="UniProtKB-UniRule"/>
</dbReference>
<dbReference type="GO" id="GO:0008652">
    <property type="term" value="P:amino acid biosynthetic process"/>
    <property type="evidence" value="ECO:0007669"/>
    <property type="project" value="UniProtKB-KW"/>
</dbReference>
<dbReference type="GO" id="GO:0009073">
    <property type="term" value="P:aromatic amino acid family biosynthetic process"/>
    <property type="evidence" value="ECO:0007669"/>
    <property type="project" value="UniProtKB-KW"/>
</dbReference>
<dbReference type="GO" id="GO:0009423">
    <property type="term" value="P:chorismate biosynthetic process"/>
    <property type="evidence" value="ECO:0007669"/>
    <property type="project" value="UniProtKB-UniRule"/>
</dbReference>
<dbReference type="CDD" id="cd00464">
    <property type="entry name" value="SK"/>
    <property type="match status" value="1"/>
</dbReference>
<dbReference type="Gene3D" id="3.40.50.300">
    <property type="entry name" value="P-loop containing nucleotide triphosphate hydrolases"/>
    <property type="match status" value="1"/>
</dbReference>
<dbReference type="HAMAP" id="MF_00109">
    <property type="entry name" value="Shikimate_kinase"/>
    <property type="match status" value="1"/>
</dbReference>
<dbReference type="InterPro" id="IPR027417">
    <property type="entry name" value="P-loop_NTPase"/>
</dbReference>
<dbReference type="InterPro" id="IPR031322">
    <property type="entry name" value="Shikimate/glucono_kinase"/>
</dbReference>
<dbReference type="InterPro" id="IPR000623">
    <property type="entry name" value="Shikimate_kinase/TSH1"/>
</dbReference>
<dbReference type="InterPro" id="IPR023000">
    <property type="entry name" value="Shikimate_kinase_CS"/>
</dbReference>
<dbReference type="NCBIfam" id="NF003456">
    <property type="entry name" value="PRK05057.1"/>
    <property type="match status" value="1"/>
</dbReference>
<dbReference type="PANTHER" id="PTHR21087">
    <property type="entry name" value="SHIKIMATE KINASE"/>
    <property type="match status" value="1"/>
</dbReference>
<dbReference type="PANTHER" id="PTHR21087:SF16">
    <property type="entry name" value="SHIKIMATE KINASE 1, CHLOROPLASTIC"/>
    <property type="match status" value="1"/>
</dbReference>
<dbReference type="Pfam" id="PF01202">
    <property type="entry name" value="SKI"/>
    <property type="match status" value="1"/>
</dbReference>
<dbReference type="PRINTS" id="PR01100">
    <property type="entry name" value="SHIKIMTKNASE"/>
</dbReference>
<dbReference type="SUPFAM" id="SSF52540">
    <property type="entry name" value="P-loop containing nucleoside triphosphate hydrolases"/>
    <property type="match status" value="1"/>
</dbReference>
<dbReference type="PROSITE" id="PS01128">
    <property type="entry name" value="SHIKIMATE_KINASE"/>
    <property type="match status" value="1"/>
</dbReference>
<sequence length="175" mass="19829">MSIVKVRNIFLIGPMGAGKSTIGRALAKELKLEFYDSDEVIEERAGADISWIFDIEGEEGFRRREQKVIDELTQKTNIVLATGGGVVITPENRNALAGRGTVIYLKTSLQQQFERTKRDTKRPLLQTEDLEGRLESLRDEREPFYDELADVSFETDKLTVKAVANNIIKYLYGEV</sequence>
<organism>
    <name type="scientific">Legionella pneumophila (strain Paris)</name>
    <dbReference type="NCBI Taxonomy" id="297246"/>
    <lineage>
        <taxon>Bacteria</taxon>
        <taxon>Pseudomonadati</taxon>
        <taxon>Pseudomonadota</taxon>
        <taxon>Gammaproteobacteria</taxon>
        <taxon>Legionellales</taxon>
        <taxon>Legionellaceae</taxon>
        <taxon>Legionella</taxon>
    </lineage>
</organism>
<evidence type="ECO:0000255" key="1">
    <source>
        <dbReference type="HAMAP-Rule" id="MF_00109"/>
    </source>
</evidence>
<protein>
    <recommendedName>
        <fullName evidence="1">Shikimate kinase</fullName>
        <shortName evidence="1">SK</shortName>
        <ecNumber evidence="1">2.7.1.71</ecNumber>
    </recommendedName>
</protein>
<accession>Q5X6H1</accession>
<feature type="chain" id="PRO_0000237890" description="Shikimate kinase">
    <location>
        <begin position="1"/>
        <end position="175"/>
    </location>
</feature>
<feature type="binding site" evidence="1">
    <location>
        <begin position="16"/>
        <end position="21"/>
    </location>
    <ligand>
        <name>ATP</name>
        <dbReference type="ChEBI" id="CHEBI:30616"/>
    </ligand>
</feature>
<feature type="binding site" evidence="1">
    <location>
        <position position="20"/>
    </location>
    <ligand>
        <name>Mg(2+)</name>
        <dbReference type="ChEBI" id="CHEBI:18420"/>
    </ligand>
</feature>
<feature type="binding site" evidence="1">
    <location>
        <position position="38"/>
    </location>
    <ligand>
        <name>substrate</name>
    </ligand>
</feature>
<feature type="binding site" evidence="1">
    <location>
        <position position="62"/>
    </location>
    <ligand>
        <name>substrate</name>
    </ligand>
</feature>
<feature type="binding site" evidence="1">
    <location>
        <position position="84"/>
    </location>
    <ligand>
        <name>substrate</name>
    </ligand>
</feature>
<feature type="binding site" evidence="1">
    <location>
        <position position="122"/>
    </location>
    <ligand>
        <name>ATP</name>
        <dbReference type="ChEBI" id="CHEBI:30616"/>
    </ligand>
</feature>
<feature type="binding site" evidence="1">
    <location>
        <position position="141"/>
    </location>
    <ligand>
        <name>substrate</name>
    </ligand>
</feature>
<reference key="1">
    <citation type="journal article" date="2004" name="Nat. Genet.">
        <title>Evidence in the Legionella pneumophila genome for exploitation of host cell functions and high genome plasticity.</title>
        <authorList>
            <person name="Cazalet C."/>
            <person name="Rusniok C."/>
            <person name="Brueggemann H."/>
            <person name="Zidane N."/>
            <person name="Magnier A."/>
            <person name="Ma L."/>
            <person name="Tichit M."/>
            <person name="Jarraud S."/>
            <person name="Bouchier C."/>
            <person name="Vandenesch F."/>
            <person name="Kunst F."/>
            <person name="Etienne J."/>
            <person name="Glaser P."/>
            <person name="Buchrieser C."/>
        </authorList>
    </citation>
    <scope>NUCLEOTIDE SEQUENCE [LARGE SCALE GENOMIC DNA]</scope>
    <source>
        <strain>Paris</strain>
    </source>
</reference>